<gene>
    <name evidence="1" type="primary">argE</name>
    <name type="ordered locus">SG3295</name>
</gene>
<protein>
    <recommendedName>
        <fullName evidence="1">Acetylornithine deacetylase</fullName>
        <shortName evidence="1">AO</shortName>
        <shortName evidence="1">Acetylornithinase</shortName>
        <ecNumber evidence="1">3.5.1.16</ecNumber>
    </recommendedName>
    <alternativeName>
        <fullName evidence="1">N-acetylornithinase</fullName>
        <shortName evidence="1">NAO</shortName>
    </alternativeName>
</protein>
<accession>B5RF48</accession>
<proteinExistence type="inferred from homology"/>
<dbReference type="EC" id="3.5.1.16" evidence="1"/>
<dbReference type="EMBL" id="AM933173">
    <property type="protein sequence ID" value="CAR39091.1"/>
    <property type="molecule type" value="Genomic_DNA"/>
</dbReference>
<dbReference type="RefSeq" id="WP_000800208.1">
    <property type="nucleotide sequence ID" value="NC_011274.1"/>
</dbReference>
<dbReference type="SMR" id="B5RF48"/>
<dbReference type="MEROPS" id="M20.974"/>
<dbReference type="KEGG" id="seg:SG3295"/>
<dbReference type="HOGENOM" id="CLU_021802_2_4_6"/>
<dbReference type="UniPathway" id="UPA00068">
    <property type="reaction ID" value="UER00110"/>
</dbReference>
<dbReference type="Proteomes" id="UP000008321">
    <property type="component" value="Chromosome"/>
</dbReference>
<dbReference type="GO" id="GO:0005737">
    <property type="term" value="C:cytoplasm"/>
    <property type="evidence" value="ECO:0007669"/>
    <property type="project" value="UniProtKB-SubCell"/>
</dbReference>
<dbReference type="GO" id="GO:0008777">
    <property type="term" value="F:acetylornithine deacetylase activity"/>
    <property type="evidence" value="ECO:0007669"/>
    <property type="project" value="UniProtKB-UniRule"/>
</dbReference>
<dbReference type="GO" id="GO:0008270">
    <property type="term" value="F:zinc ion binding"/>
    <property type="evidence" value="ECO:0007669"/>
    <property type="project" value="UniProtKB-UniRule"/>
</dbReference>
<dbReference type="GO" id="GO:0006526">
    <property type="term" value="P:L-arginine biosynthetic process"/>
    <property type="evidence" value="ECO:0007669"/>
    <property type="project" value="UniProtKB-UniRule"/>
</dbReference>
<dbReference type="CDD" id="cd03894">
    <property type="entry name" value="M20_ArgE"/>
    <property type="match status" value="1"/>
</dbReference>
<dbReference type="FunFam" id="3.30.70.360:FF:000003">
    <property type="entry name" value="Acetylornithine deacetylase"/>
    <property type="match status" value="1"/>
</dbReference>
<dbReference type="Gene3D" id="3.30.70.360">
    <property type="match status" value="1"/>
</dbReference>
<dbReference type="Gene3D" id="3.40.630.10">
    <property type="entry name" value="Zn peptidases"/>
    <property type="match status" value="1"/>
</dbReference>
<dbReference type="HAMAP" id="MF_01108">
    <property type="entry name" value="ArgE"/>
    <property type="match status" value="1"/>
</dbReference>
<dbReference type="InterPro" id="IPR010169">
    <property type="entry name" value="AcOrn-deacetyl"/>
</dbReference>
<dbReference type="InterPro" id="IPR001261">
    <property type="entry name" value="ArgE/DapE_CS"/>
</dbReference>
<dbReference type="InterPro" id="IPR036264">
    <property type="entry name" value="Bact_exopeptidase_dim_dom"/>
</dbReference>
<dbReference type="InterPro" id="IPR002933">
    <property type="entry name" value="Peptidase_M20"/>
</dbReference>
<dbReference type="InterPro" id="IPR011650">
    <property type="entry name" value="Peptidase_M20_dimer"/>
</dbReference>
<dbReference type="InterPro" id="IPR050072">
    <property type="entry name" value="Peptidase_M20A"/>
</dbReference>
<dbReference type="NCBIfam" id="TIGR01892">
    <property type="entry name" value="AcOrn-deacetyl"/>
    <property type="match status" value="1"/>
</dbReference>
<dbReference type="NCBIfam" id="NF003474">
    <property type="entry name" value="PRK05111.1"/>
    <property type="match status" value="1"/>
</dbReference>
<dbReference type="PANTHER" id="PTHR43808">
    <property type="entry name" value="ACETYLORNITHINE DEACETYLASE"/>
    <property type="match status" value="1"/>
</dbReference>
<dbReference type="PANTHER" id="PTHR43808:SF1">
    <property type="entry name" value="ACETYLORNITHINE DEACETYLASE"/>
    <property type="match status" value="1"/>
</dbReference>
<dbReference type="Pfam" id="PF07687">
    <property type="entry name" value="M20_dimer"/>
    <property type="match status" value="1"/>
</dbReference>
<dbReference type="Pfam" id="PF01546">
    <property type="entry name" value="Peptidase_M20"/>
    <property type="match status" value="1"/>
</dbReference>
<dbReference type="SUPFAM" id="SSF55031">
    <property type="entry name" value="Bacterial exopeptidase dimerisation domain"/>
    <property type="match status" value="1"/>
</dbReference>
<dbReference type="SUPFAM" id="SSF53187">
    <property type="entry name" value="Zn-dependent exopeptidases"/>
    <property type="match status" value="1"/>
</dbReference>
<dbReference type="PROSITE" id="PS00758">
    <property type="entry name" value="ARGE_DAPE_CPG2_1"/>
    <property type="match status" value="1"/>
</dbReference>
<dbReference type="PROSITE" id="PS00759">
    <property type="entry name" value="ARGE_DAPE_CPG2_2"/>
    <property type="match status" value="1"/>
</dbReference>
<organism>
    <name type="scientific">Salmonella gallinarum (strain 287/91 / NCTC 13346)</name>
    <dbReference type="NCBI Taxonomy" id="550538"/>
    <lineage>
        <taxon>Bacteria</taxon>
        <taxon>Pseudomonadati</taxon>
        <taxon>Pseudomonadota</taxon>
        <taxon>Gammaproteobacteria</taxon>
        <taxon>Enterobacterales</taxon>
        <taxon>Enterobacteriaceae</taxon>
        <taxon>Salmonella</taxon>
    </lineage>
</organism>
<comment type="function">
    <text evidence="1">Catalyzes the hydrolysis of the amide bond of N(2)-acetylated L-amino acids. Cleaves the acetyl group from N-acetyl-L-ornithine to form L-ornithine, an intermediate in L-arginine biosynthesis pathway, and a branchpoint in the synthesis of polyamines.</text>
</comment>
<comment type="catalytic activity">
    <reaction evidence="1">
        <text>N(2)-acetyl-L-ornithine + H2O = L-ornithine + acetate</text>
        <dbReference type="Rhea" id="RHEA:15941"/>
        <dbReference type="ChEBI" id="CHEBI:15377"/>
        <dbReference type="ChEBI" id="CHEBI:30089"/>
        <dbReference type="ChEBI" id="CHEBI:46911"/>
        <dbReference type="ChEBI" id="CHEBI:57805"/>
        <dbReference type="EC" id="3.5.1.16"/>
    </reaction>
</comment>
<comment type="cofactor">
    <cofactor evidence="1">
        <name>Zn(2+)</name>
        <dbReference type="ChEBI" id="CHEBI:29105"/>
    </cofactor>
    <cofactor evidence="1">
        <name>Co(2+)</name>
        <dbReference type="ChEBI" id="CHEBI:48828"/>
    </cofactor>
    <text evidence="1">Binds 2 Zn(2+) or Co(2+) ions per subunit.</text>
</comment>
<comment type="cofactor">
    <cofactor evidence="1">
        <name>glutathione</name>
        <dbReference type="ChEBI" id="CHEBI:57925"/>
    </cofactor>
</comment>
<comment type="pathway">
    <text evidence="1">Amino-acid biosynthesis; L-arginine biosynthesis; L-ornithine from N(2)-acetyl-L-ornithine (linear): step 1/1.</text>
</comment>
<comment type="subunit">
    <text evidence="1">Homodimer.</text>
</comment>
<comment type="subcellular location">
    <subcellularLocation>
        <location evidence="1">Cytoplasm</location>
    </subcellularLocation>
</comment>
<comment type="similarity">
    <text evidence="1">Belongs to the peptidase M20A family. ArgE subfamily.</text>
</comment>
<evidence type="ECO:0000255" key="1">
    <source>
        <dbReference type="HAMAP-Rule" id="MF_01108"/>
    </source>
</evidence>
<feature type="chain" id="PRO_1000137076" description="Acetylornithine deacetylase">
    <location>
        <begin position="1"/>
        <end position="383"/>
    </location>
</feature>
<feature type="active site" evidence="1">
    <location>
        <position position="82"/>
    </location>
</feature>
<feature type="active site" evidence="1">
    <location>
        <position position="144"/>
    </location>
</feature>
<feature type="binding site" evidence="1">
    <location>
        <position position="80"/>
    </location>
    <ligand>
        <name>Zn(2+)</name>
        <dbReference type="ChEBI" id="CHEBI:29105"/>
        <label>1</label>
    </ligand>
</feature>
<feature type="binding site" evidence="1">
    <location>
        <position position="112"/>
    </location>
    <ligand>
        <name>Zn(2+)</name>
        <dbReference type="ChEBI" id="CHEBI:29105"/>
        <label>1</label>
    </ligand>
</feature>
<feature type="binding site" evidence="1">
    <location>
        <position position="112"/>
    </location>
    <ligand>
        <name>Zn(2+)</name>
        <dbReference type="ChEBI" id="CHEBI:29105"/>
        <label>2</label>
    </ligand>
</feature>
<feature type="binding site" evidence="1">
    <location>
        <position position="145"/>
    </location>
    <ligand>
        <name>Zn(2+)</name>
        <dbReference type="ChEBI" id="CHEBI:29105"/>
        <label>2</label>
    </ligand>
</feature>
<feature type="binding site" evidence="1">
    <location>
        <position position="169"/>
    </location>
    <ligand>
        <name>Zn(2+)</name>
        <dbReference type="ChEBI" id="CHEBI:29105"/>
        <label>1</label>
    </ligand>
</feature>
<feature type="binding site" evidence="1">
    <location>
        <position position="355"/>
    </location>
    <ligand>
        <name>Zn(2+)</name>
        <dbReference type="ChEBI" id="CHEBI:29105"/>
        <label>2</label>
    </ligand>
</feature>
<reference key="1">
    <citation type="journal article" date="2008" name="Genome Res.">
        <title>Comparative genome analysis of Salmonella enteritidis PT4 and Salmonella gallinarum 287/91 provides insights into evolutionary and host adaptation pathways.</title>
        <authorList>
            <person name="Thomson N.R."/>
            <person name="Clayton D.J."/>
            <person name="Windhorst D."/>
            <person name="Vernikos G."/>
            <person name="Davidson S."/>
            <person name="Churcher C."/>
            <person name="Quail M.A."/>
            <person name="Stevens M."/>
            <person name="Jones M.A."/>
            <person name="Watson M."/>
            <person name="Barron A."/>
            <person name="Layton A."/>
            <person name="Pickard D."/>
            <person name="Kingsley R.A."/>
            <person name="Bignell A."/>
            <person name="Clark L."/>
            <person name="Harris B."/>
            <person name="Ormond D."/>
            <person name="Abdellah Z."/>
            <person name="Brooks K."/>
            <person name="Cherevach I."/>
            <person name="Chillingworth T."/>
            <person name="Woodward J."/>
            <person name="Norberczak H."/>
            <person name="Lord A."/>
            <person name="Arrowsmith C."/>
            <person name="Jagels K."/>
            <person name="Moule S."/>
            <person name="Mungall K."/>
            <person name="Saunders M."/>
            <person name="Whitehead S."/>
            <person name="Chabalgoity J.A."/>
            <person name="Maskell D."/>
            <person name="Humphreys T."/>
            <person name="Roberts M."/>
            <person name="Barrow P.A."/>
            <person name="Dougan G."/>
            <person name="Parkhill J."/>
        </authorList>
    </citation>
    <scope>NUCLEOTIDE SEQUENCE [LARGE SCALE GENOMIC DNA]</scope>
    <source>
        <strain>287/91 / NCTC 13346</strain>
    </source>
</reference>
<sequence length="383" mass="42202">MKNVLPPFIEIYRALIATPSISATEESLDQSNASLITLLAGWFSDLGFNVEVQPVPGTRNKFNMLASTGHGAGGLLLTGHTDTVPFDDGRWTRDPFTLTEHDNKLYGLGTADMKGFFAFILDALRDVDVTKLKKPLYILATADEETSMAGARYFSETTALRPDCAIIGEPTSLQPIRAHKGHISNVVRVLGQSGHSSDPARGVNAIELMHDAIGHIMQLRDSLKARYHYEAFTVPYPTLNLGHIHGGDASNRICACCELHMDIRPLPGMTLNDLNGLLNDALAPVSERWPGRLTVAELHPPIPGYECPPDHQLVEVVEKLLGTKTDVVNYCTEAPFMQTLCPTLVLGPGSINQAHQPDEYLETRFIKPTRELITQVVHHFCWH</sequence>
<name>ARGE_SALG2</name>
<keyword id="KW-0028">Amino-acid biosynthesis</keyword>
<keyword id="KW-0055">Arginine biosynthesis</keyword>
<keyword id="KW-0170">Cobalt</keyword>
<keyword id="KW-0963">Cytoplasm</keyword>
<keyword id="KW-0378">Hydrolase</keyword>
<keyword id="KW-0479">Metal-binding</keyword>
<keyword id="KW-0862">Zinc</keyword>